<sequence>MKLTTVLIVAVLVLAACQFTVTDNSGDDTENPSLRSAGENQNPDSTKTITARATRARTNMRRGLSRPSKGCIGGGDPCEFHRGYTCCSEHCIIWVCA</sequence>
<proteinExistence type="inferred from homology"/>
<protein>
    <recommendedName>
        <fullName evidence="5">Conotoxin Cal6.1e</fullName>
    </recommendedName>
    <alternativeName>
        <fullName evidence="4">Conotoxin Cl6.3</fullName>
    </alternativeName>
</protein>
<accession>D2Y499</accession>
<accession>D6C4L0</accession>
<dbReference type="EMBL" id="FJ959152">
    <property type="protein sequence ID" value="ADB93122.1"/>
    <property type="molecule type" value="Genomic_DNA"/>
</dbReference>
<dbReference type="EMBL" id="GU306164">
    <property type="protein sequence ID" value="ADB04242.1"/>
    <property type="molecule type" value="mRNA"/>
</dbReference>
<dbReference type="SMR" id="D2Y499"/>
<dbReference type="ConoServer" id="3973">
    <property type="toxin name" value="Cal6.1e precursor"/>
</dbReference>
<dbReference type="GO" id="GO:0005576">
    <property type="term" value="C:extracellular region"/>
    <property type="evidence" value="ECO:0007669"/>
    <property type="project" value="UniProtKB-SubCell"/>
</dbReference>
<dbReference type="GO" id="GO:0008200">
    <property type="term" value="F:ion channel inhibitor activity"/>
    <property type="evidence" value="ECO:0007669"/>
    <property type="project" value="InterPro"/>
</dbReference>
<dbReference type="GO" id="GO:0090729">
    <property type="term" value="F:toxin activity"/>
    <property type="evidence" value="ECO:0007669"/>
    <property type="project" value="UniProtKB-KW"/>
</dbReference>
<dbReference type="InterPro" id="IPR004214">
    <property type="entry name" value="Conotoxin"/>
</dbReference>
<dbReference type="Pfam" id="PF02950">
    <property type="entry name" value="Conotoxin"/>
    <property type="match status" value="1"/>
</dbReference>
<evidence type="ECO:0000250" key="1"/>
<evidence type="ECO:0000255" key="2"/>
<evidence type="ECO:0000256" key="3">
    <source>
        <dbReference type="SAM" id="MobiDB-lite"/>
    </source>
</evidence>
<evidence type="ECO:0000303" key="4">
    <source>
    </source>
</evidence>
<evidence type="ECO:0000303" key="5">
    <source>
    </source>
</evidence>
<evidence type="ECO:0000305" key="6"/>
<evidence type="ECO:0000305" key="7">
    <source>
    </source>
</evidence>
<comment type="function">
    <text evidence="6">Probable neurotoxin with unknown target. Possibly targets ion channels.</text>
</comment>
<comment type="subcellular location">
    <subcellularLocation>
        <location evidence="7">Secreted</location>
    </subcellularLocation>
</comment>
<comment type="tissue specificity">
    <text evidence="7">Expressed by the venom duct.</text>
</comment>
<comment type="domain">
    <text evidence="1">The presence of a 'disulfide through disulfide knot' structurally defines this protein as a knottin.</text>
</comment>
<comment type="domain">
    <text>The cysteine framework is VI/VII (C-C-CC-C-C).</text>
</comment>
<comment type="similarity">
    <text evidence="6">Belongs to the conotoxin O1 superfamily.</text>
</comment>
<reference key="1">
    <citation type="journal article" date="2010" name="Mol. Phylogenet. Evol.">
        <title>Evolution of Conus peptide toxins: analysis of Conus californicus Reeve, 1844.</title>
        <authorList>
            <person name="Biggs J.S."/>
            <person name="Watkins M."/>
            <person name="Puillandre N."/>
            <person name="Ownby J.P."/>
            <person name="Lopez-Vera E."/>
            <person name="Christensen S."/>
            <person name="Moreno K.J."/>
            <person name="Bernaldez J."/>
            <person name="Licea-Navarro A."/>
            <person name="Corneli P.S."/>
            <person name="Olivera B.M."/>
        </authorList>
    </citation>
    <scope>NUCLEOTIDE SEQUENCE [GENOMIC DNA]</scope>
</reference>
<reference key="2">
    <citation type="journal article" date="2011" name="Toxicon">
        <title>Diversity of conotoxin types from Conus californicus reflects a diversity of prey types and a novel evolutionary history.</title>
        <authorList>
            <person name="Elliger C.A."/>
            <person name="Richmond T.A."/>
            <person name="Lebaric Z.N."/>
            <person name="Pierce N.T."/>
            <person name="Sweedler J.V."/>
            <person name="Gilly W.F."/>
        </authorList>
    </citation>
    <scope>NUCLEOTIDE SEQUENCE [MRNA] OF 63-97</scope>
    <source>
        <tissue>Venom duct</tissue>
    </source>
</reference>
<feature type="signal peptide" evidence="2">
    <location>
        <begin position="1"/>
        <end position="22"/>
    </location>
</feature>
<feature type="propeptide" id="PRO_0000414973" evidence="7">
    <location>
        <begin position="23"/>
        <end position="60"/>
    </location>
</feature>
<feature type="peptide" id="PRO_5000566323" description="Conotoxin Cal6.1e" evidence="7">
    <location>
        <begin position="63"/>
        <end position="97"/>
    </location>
</feature>
<feature type="region of interest" description="Disordered" evidence="3">
    <location>
        <begin position="23"/>
        <end position="49"/>
    </location>
</feature>
<feature type="compositionally biased region" description="Polar residues" evidence="3">
    <location>
        <begin position="31"/>
        <end position="45"/>
    </location>
</feature>
<feature type="disulfide bond" evidence="1">
    <location>
        <begin position="71"/>
        <end position="87"/>
    </location>
</feature>
<feature type="disulfide bond" evidence="1">
    <location>
        <begin position="78"/>
        <end position="91"/>
    </location>
</feature>
<feature type="disulfide bond" evidence="1">
    <location>
        <begin position="86"/>
        <end position="96"/>
    </location>
</feature>
<feature type="sequence conflict" description="In Ref. 2; ADB04242." evidence="6" ref="2">
    <original>G</original>
    <variation>R</variation>
    <location>
        <position position="70"/>
    </location>
</feature>
<name>O16E_CONCL</name>
<organism>
    <name type="scientific">Californiconus californicus</name>
    <name type="common">California cone</name>
    <name type="synonym">Conus californicus</name>
    <dbReference type="NCBI Taxonomy" id="1736779"/>
    <lineage>
        <taxon>Eukaryota</taxon>
        <taxon>Metazoa</taxon>
        <taxon>Spiralia</taxon>
        <taxon>Lophotrochozoa</taxon>
        <taxon>Mollusca</taxon>
        <taxon>Gastropoda</taxon>
        <taxon>Caenogastropoda</taxon>
        <taxon>Neogastropoda</taxon>
        <taxon>Conoidea</taxon>
        <taxon>Conidae</taxon>
        <taxon>Californiconus</taxon>
    </lineage>
</organism>
<keyword id="KW-0165">Cleavage on pair of basic residues</keyword>
<keyword id="KW-1015">Disulfide bond</keyword>
<keyword id="KW-0872">Ion channel impairing toxin</keyword>
<keyword id="KW-0960">Knottin</keyword>
<keyword id="KW-0528">Neurotoxin</keyword>
<keyword id="KW-0964">Secreted</keyword>
<keyword id="KW-0732">Signal</keyword>
<keyword id="KW-0800">Toxin</keyword>